<proteinExistence type="evidence at transcript level"/>
<accession>A0JM13</accession>
<accession>F7AQ82</accession>
<accession>F7AX60</accession>
<accession>F7BQ67</accession>
<evidence type="ECO:0000250" key="1"/>
<evidence type="ECO:0000255" key="2">
    <source>
        <dbReference type="PROSITE-ProRule" id="PRU00041"/>
    </source>
</evidence>
<evidence type="ECO:0000256" key="3">
    <source>
        <dbReference type="SAM" id="MobiDB-lite"/>
    </source>
</evidence>
<evidence type="ECO:0000305" key="4"/>
<reference key="1">
    <citation type="journal article" date="2010" name="Science">
        <title>The genome of the Western clawed frog Xenopus tropicalis.</title>
        <authorList>
            <person name="Hellsten U."/>
            <person name="Harland R.M."/>
            <person name="Gilchrist M.J."/>
            <person name="Hendrix D."/>
            <person name="Jurka J."/>
            <person name="Kapitonov V."/>
            <person name="Ovcharenko I."/>
            <person name="Putnam N.H."/>
            <person name="Shu S."/>
            <person name="Taher L."/>
            <person name="Blitz I.L."/>
            <person name="Blumberg B."/>
            <person name="Dichmann D.S."/>
            <person name="Dubchak I."/>
            <person name="Amaya E."/>
            <person name="Detter J.C."/>
            <person name="Fletcher R."/>
            <person name="Gerhard D.S."/>
            <person name="Goodstein D."/>
            <person name="Graves T."/>
            <person name="Grigoriev I.V."/>
            <person name="Grimwood J."/>
            <person name="Kawashima T."/>
            <person name="Lindquist E."/>
            <person name="Lucas S.M."/>
            <person name="Mead P.E."/>
            <person name="Mitros T."/>
            <person name="Ogino H."/>
            <person name="Ohta Y."/>
            <person name="Poliakov A.V."/>
            <person name="Pollet N."/>
            <person name="Robert J."/>
            <person name="Salamov A."/>
            <person name="Sater A.K."/>
            <person name="Schmutz J."/>
            <person name="Terry A."/>
            <person name="Vize P.D."/>
            <person name="Warren W.C."/>
            <person name="Wells D."/>
            <person name="Wills A."/>
            <person name="Wilson R.K."/>
            <person name="Zimmerman L.B."/>
            <person name="Zorn A.M."/>
            <person name="Grainger R."/>
            <person name="Grammer T."/>
            <person name="Khokha M.K."/>
            <person name="Richardson P.M."/>
            <person name="Rokhsar D.S."/>
        </authorList>
    </citation>
    <scope>NUCLEOTIDE SEQUENCE [LARGE SCALE GENOMIC DNA]</scope>
</reference>
<reference key="2">
    <citation type="submission" date="2006-10" db="EMBL/GenBank/DDBJ databases">
        <authorList>
            <consortium name="NIH - Xenopus Gene Collection (XGC) project"/>
        </authorList>
    </citation>
    <scope>NUCLEOTIDE SEQUENCE [LARGE SCALE MRNA]</scope>
    <source>
        <tissue>Testis</tissue>
    </source>
</reference>
<gene>
    <name type="primary">c2cd3</name>
</gene>
<name>C2CD3_XENTR</name>
<dbReference type="EMBL" id="AAMC01126305">
    <property type="status" value="NOT_ANNOTATED_CDS"/>
    <property type="molecule type" value="Genomic_DNA"/>
</dbReference>
<dbReference type="EMBL" id="AAMC01126306">
    <property type="status" value="NOT_ANNOTATED_CDS"/>
    <property type="molecule type" value="Genomic_DNA"/>
</dbReference>
<dbReference type="EMBL" id="AAMC01126307">
    <property type="status" value="NOT_ANNOTATED_CDS"/>
    <property type="molecule type" value="Genomic_DNA"/>
</dbReference>
<dbReference type="EMBL" id="AAMC01126308">
    <property type="status" value="NOT_ANNOTATED_CDS"/>
    <property type="molecule type" value="Genomic_DNA"/>
</dbReference>
<dbReference type="EMBL" id="AAMC01126309">
    <property type="status" value="NOT_ANNOTATED_CDS"/>
    <property type="molecule type" value="Genomic_DNA"/>
</dbReference>
<dbReference type="EMBL" id="AAMC01126310">
    <property type="status" value="NOT_ANNOTATED_CDS"/>
    <property type="molecule type" value="Genomic_DNA"/>
</dbReference>
<dbReference type="EMBL" id="AAMC01126311">
    <property type="status" value="NOT_ANNOTATED_CDS"/>
    <property type="molecule type" value="Genomic_DNA"/>
</dbReference>
<dbReference type="EMBL" id="BC125698">
    <property type="protein sequence ID" value="AAI25699.1"/>
    <property type="molecule type" value="mRNA"/>
</dbReference>
<dbReference type="RefSeq" id="NP_001072727.1">
    <property type="nucleotide sequence ID" value="NM_001079259.1"/>
</dbReference>
<dbReference type="FunCoup" id="A0JM13">
    <property type="interactions" value="1660"/>
</dbReference>
<dbReference type="STRING" id="8364.ENSXETP00000015754"/>
<dbReference type="PaxDb" id="8364-ENSXETP00000055765"/>
<dbReference type="GeneID" id="780184"/>
<dbReference type="KEGG" id="xtr:780184"/>
<dbReference type="AGR" id="Xenbase:XB-GENE-5904944"/>
<dbReference type="CTD" id="26005"/>
<dbReference type="Xenbase" id="XB-GENE-5904944">
    <property type="gene designation" value="c2cd3"/>
</dbReference>
<dbReference type="eggNOG" id="ENOG502QRQ8">
    <property type="taxonomic scope" value="Eukaryota"/>
</dbReference>
<dbReference type="InParanoid" id="A0JM13"/>
<dbReference type="OrthoDB" id="79771at2759"/>
<dbReference type="TreeFam" id="TF323591"/>
<dbReference type="Reactome" id="R-XTR-5620912">
    <property type="pathway name" value="Anchoring of the basal body to the plasma membrane"/>
</dbReference>
<dbReference type="Proteomes" id="UP000008143">
    <property type="component" value="Chromosome 2"/>
</dbReference>
<dbReference type="GO" id="GO:0034451">
    <property type="term" value="C:centriolar satellite"/>
    <property type="evidence" value="ECO:0000250"/>
    <property type="project" value="UniProtKB"/>
</dbReference>
<dbReference type="GO" id="GO:0005814">
    <property type="term" value="C:centriole"/>
    <property type="evidence" value="ECO:0000250"/>
    <property type="project" value="UniProtKB"/>
</dbReference>
<dbReference type="GO" id="GO:0005929">
    <property type="term" value="C:cilium"/>
    <property type="evidence" value="ECO:0007669"/>
    <property type="project" value="UniProtKB-KW"/>
</dbReference>
<dbReference type="GO" id="GO:0005737">
    <property type="term" value="C:cytoplasm"/>
    <property type="evidence" value="ECO:0007669"/>
    <property type="project" value="UniProtKB-KW"/>
</dbReference>
<dbReference type="GO" id="GO:0061511">
    <property type="term" value="P:centriole elongation"/>
    <property type="evidence" value="ECO:0000250"/>
    <property type="project" value="UniProtKB"/>
</dbReference>
<dbReference type="GO" id="GO:1905515">
    <property type="term" value="P:non-motile cilium assembly"/>
    <property type="evidence" value="ECO:0000250"/>
    <property type="project" value="UniProtKB"/>
</dbReference>
<dbReference type="GO" id="GO:0071539">
    <property type="term" value="P:protein localization to centrosome"/>
    <property type="evidence" value="ECO:0000250"/>
    <property type="project" value="UniProtKB"/>
</dbReference>
<dbReference type="CDD" id="cd00030">
    <property type="entry name" value="C2"/>
    <property type="match status" value="1"/>
</dbReference>
<dbReference type="CDD" id="cd08683">
    <property type="entry name" value="C2_C2cd3"/>
    <property type="match status" value="1"/>
</dbReference>
<dbReference type="Gene3D" id="2.60.40.150">
    <property type="entry name" value="C2 domain"/>
    <property type="match status" value="2"/>
</dbReference>
<dbReference type="InterPro" id="IPR037775">
    <property type="entry name" value="C2_C2CD3"/>
</dbReference>
<dbReference type="InterPro" id="IPR000008">
    <property type="entry name" value="C2_dom"/>
</dbReference>
<dbReference type="InterPro" id="IPR035892">
    <property type="entry name" value="C2_domain_sf"/>
</dbReference>
<dbReference type="PANTHER" id="PTHR21254">
    <property type="entry name" value="C2 DOMAIN-CONTAINING PROTEIN 3"/>
    <property type="match status" value="1"/>
</dbReference>
<dbReference type="PANTHER" id="PTHR21254:SF1">
    <property type="entry name" value="C2 DOMAIN-CONTAINING PROTEIN 3"/>
    <property type="match status" value="1"/>
</dbReference>
<dbReference type="Pfam" id="PF00168">
    <property type="entry name" value="C2"/>
    <property type="match status" value="3"/>
</dbReference>
<dbReference type="Pfam" id="PF25339">
    <property type="entry name" value="C2_C2CD3_N"/>
    <property type="match status" value="1"/>
</dbReference>
<dbReference type="SMART" id="SM00239">
    <property type="entry name" value="C2"/>
    <property type="match status" value="4"/>
</dbReference>
<dbReference type="SUPFAM" id="SSF49562">
    <property type="entry name" value="C2 domain (Calcium/lipid-binding domain, CaLB)"/>
    <property type="match status" value="3"/>
</dbReference>
<dbReference type="PROSITE" id="PS50004">
    <property type="entry name" value="C2"/>
    <property type="match status" value="6"/>
</dbReference>
<sequence>MKSRKVKSVRPGRGRILGLTDVTPSTSLPPLVEGQVRSFLQVTVSKILWTVPKPPPSVLVRLRWWGETANGTVFRPRDSSQTEQKGAKTTTRYAVRCGPKQFTSYLTDMGMLVFEVMTKLDHFPIGRAQISGIAQLSLAHPVSGFFTIVSPTSEKLGELQVSVQLEPLPETYDSSSSAPNTDISFDHASESYGKALTGHPTTMNDPPQPIILSLASADKRESESSSRVTTPRGRDHLYFQENADPGKDSYRGTQDHVTVGWSNVTEGVQSIKPIYSEGTTAGKDALTVNSGPATKDLLSALLDQGSKLRDAMVVSALKSSPDLDHNPDIKLPLALNNYSLSQARATSEIPSPTLMRNLLNSRHSPQTRDILLQPADSFIPDMEAPSDAKAIELLLGSSVLSPGHYWDGTGSPPESISGSDFYNESELNDPLYDQSLLEKLFYKAPKSDSSASDFMSDDENTRSQNKKNKIALDRGRHRDNSPSEYKEDAKQTKGNDSLRDSKTSEKSTSRCEGISLSMDQAALLGQIHVAHVVVESLRVPLDGTAVTPSKTNSRGRPPRPVRPAKQTFFVEFQFPVLSKSRSGEVNSATEITRLVSSKVVNGSIKFQQRFTFPVLFSGQMIKHWWNTDLTFRIFLRKGTQNKPGPVGSATLPLRDVLQSPGLSVTCSLPVSCTAEDSHTAAGPLKISVALAGDNKNIHDISEKTLEPENQAPVLPAVTSKAELENSASYTDLRPVAEKSSPLRQSLPPHIGNGGPKVSFSQNPQQTAEEDGLLLHIVLMVPEGKGLVAAGGDSSGICNSYLNCKLFSAQEATRSSVVWGSTQPQYNFSQVAPLTLNARLLERMKNNVMIIEIWNRVASPGQDQLLGLAKLPLHQFYMSFSDPKITRLLLQAQYPVVAVDSYVPIIDVFSGCDRGKLKVLLAIGSGDQVVALQRLKNEEGTSQTAMPRPAHFLDPPLSSSQMGRPQEGMTDHIFEIHVENVKGLTPLQSTVWGEADCFVQYYFPAHGPDSHTAIDLPEIAMTLKPVRTATTLCVPDPVFNDRQSHTIVAQSDTPVQRLLLGAYSMQGLSGGGGVPFEIWCRYYYPNVRDQMVAKGVLPLSRLCAMVTMQHREDVGIQAFSLPLIPRSEKSAELPPQPSGLLNVNVTYRRSMRNPVGMLATRMASISVQIHRASGLQAAARLVAQQDASFQYSADVGVNAYVTIHPAFLPDVELRNTRTVARTFCPEFDHHYEFPCNMVIQRNNGEACSLAEVLYFSEIVLSIHHQNVASVGSTRPQPVRDYHLGMVRIPCRQLITKRSGVSGWYPVTVPEDSKLPTDSTILHSVVGGLELSVHFAHHSDRDRVLEVARGLGWNEYNEDFQEAIATEADEWHKREDLVNLSVNIPKIWLPLHCLLLAGHKHIHKSTYCYLRYKFYDREAVCSPLRRPRLSEDGQQATIMFELSENRELIKHQPLVWYLREERMEIQVWRSYGKDTNGPRPQDTDRLIGCAYVDLKALSENTSRTLAVSGVYPLFKRNVSSLWGAAVRVHLALSSAYHPSNSSRRLSCAGERSQSEGEEWAPTSGDSFEEKQDDSAKNDKPEAKTEVPLLDAKEQPVGEVDLKNTFAASIVVERAMHLSLKGTPLTERAAATPTCCVSYPVAGCSEPVTTPVIANTDSPLWNFQHQARLHKELLLDPQQRLVFKVWHKTDVERVVGFASVDLSPLLSGFQSICGWYNIVDFVGQCQGQVKVSITPLEGVAHLKTKVTSQRSSSYQSRPAFCSSFSYNPSQSEVPAFIPHIPTLHHQLSDRENSGPLFPFLRHEEHMENVRRFHESLQQAERNAHTVEGLDSLSQSSRSSLLSALRKNLGELDEIQKYFNQKLYRSISNAETSRCASVQIPQVQPPNSEPAEEDSDAKMLLQKSSFLVSQVSNLITGLQGIPKFAPAFSSTEQRLDVQGQTSVQHQQVDNMEPMAPERSEAYEREGQRSDTPPFSPLGSLNVSGEKLMEFIGTDMDEKERHLFAEKHQEEQDKHIIHGSSDEEYEEDVIEPRTLNEITTMTDRTSPWSSILSERDSDSMDHPQDQPVNPLAAENNRVITDFFSSFHQNDPSSVLSSARSTDSEVLAEGSRVRKISSSSGSEAETVGVQLSVDPAEQGALGEAESEAESQEMDGDPEANRTEEEQQDPVTVFSALSSGSDESEHITYGASEPDCSPPQDEPETDYPCSEPLEGNMHHIDEEEQPAGSESPQVPPSNLLSDPVIVPNFFLPPQHLEASMRHLSLSAVREGRSDTPGIPFRRSKRQKPRLAPADLPKEETNRIARIFAAQFPGPPTPP</sequence>
<organism>
    <name type="scientific">Xenopus tropicalis</name>
    <name type="common">Western clawed frog</name>
    <name type="synonym">Silurana tropicalis</name>
    <dbReference type="NCBI Taxonomy" id="8364"/>
    <lineage>
        <taxon>Eukaryota</taxon>
        <taxon>Metazoa</taxon>
        <taxon>Chordata</taxon>
        <taxon>Craniata</taxon>
        <taxon>Vertebrata</taxon>
        <taxon>Euteleostomi</taxon>
        <taxon>Amphibia</taxon>
        <taxon>Batrachia</taxon>
        <taxon>Anura</taxon>
        <taxon>Pipoidea</taxon>
        <taxon>Pipidae</taxon>
        <taxon>Xenopodinae</taxon>
        <taxon>Xenopus</taxon>
        <taxon>Silurana</taxon>
    </lineage>
</organism>
<comment type="function">
    <text evidence="1">Component of the centrioles that acts as a positive regulator of centriole elongation. Promotes assembly of centriolar distal appendage, a structure at the distal end of the mother centriole that acts as an anchor of the cilium. Required for primary cilium formation (By similarity).</text>
</comment>
<comment type="subcellular location">
    <subcellularLocation>
        <location evidence="1">Cytoplasm</location>
        <location evidence="1">Cytoskeleton</location>
        <location evidence="1">Cilium basal body</location>
    </subcellularLocation>
    <subcellularLocation>
        <location evidence="1">Cytoplasm</location>
        <location evidence="1">Cytoskeleton</location>
        <location evidence="1">Microtubule organizing center</location>
        <location evidence="1">Centrosome</location>
        <location evidence="1">Centriole</location>
    </subcellularLocation>
    <text evidence="1">Localizes to centriolar satellites. Also localizes to the distal ends of the mother and daughter centrioles (By similarity).</text>
</comment>
<keyword id="KW-0966">Cell projection</keyword>
<keyword id="KW-0969">Cilium</keyword>
<keyword id="KW-0970">Cilium biogenesis/degradation</keyword>
<keyword id="KW-0963">Cytoplasm</keyword>
<keyword id="KW-0206">Cytoskeleton</keyword>
<keyword id="KW-1185">Reference proteome</keyword>
<keyword id="KW-0677">Repeat</keyword>
<feature type="chain" id="PRO_0000311241" description="C2 domain-containing protein 3">
    <location>
        <begin position="1"/>
        <end position="2311"/>
    </location>
</feature>
<feature type="domain" description="C2 1" evidence="2">
    <location>
        <begin position="508"/>
        <end position="666"/>
    </location>
</feature>
<feature type="domain" description="C2 2" evidence="2">
    <location>
        <begin position="751"/>
        <end position="888"/>
    </location>
</feature>
<feature type="domain" description="C2 3" evidence="2">
    <location>
        <begin position="952"/>
        <end position="1112"/>
    </location>
</feature>
<feature type="domain" description="C2 4" evidence="2">
    <location>
        <begin position="1136"/>
        <end position="1303"/>
    </location>
</feature>
<feature type="domain" description="C2 5" evidence="2">
    <location>
        <begin position="1370"/>
        <end position="1505"/>
    </location>
</feature>
<feature type="domain" description="C2 6" evidence="2">
    <location>
        <begin position="1581"/>
        <end position="1713"/>
    </location>
</feature>
<feature type="region of interest" description="Disordered" evidence="3">
    <location>
        <begin position="447"/>
        <end position="511"/>
    </location>
</feature>
<feature type="region of interest" description="Disordered" evidence="3">
    <location>
        <begin position="543"/>
        <end position="562"/>
    </location>
</feature>
<feature type="region of interest" description="Disordered" evidence="3">
    <location>
        <begin position="939"/>
        <end position="964"/>
    </location>
</feature>
<feature type="region of interest" description="Disordered" evidence="3">
    <location>
        <begin position="1536"/>
        <end position="1589"/>
    </location>
</feature>
<feature type="region of interest" description="Disordered" evidence="3">
    <location>
        <begin position="1955"/>
        <end position="1977"/>
    </location>
</feature>
<feature type="region of interest" description="Disordered" evidence="3">
    <location>
        <begin position="2036"/>
        <end position="2065"/>
    </location>
</feature>
<feature type="region of interest" description="Disordered" evidence="3">
    <location>
        <begin position="2084"/>
        <end position="2233"/>
    </location>
</feature>
<feature type="region of interest" description="Disordered" evidence="3">
    <location>
        <begin position="2261"/>
        <end position="2292"/>
    </location>
</feature>
<feature type="compositionally biased region" description="Basic and acidic residues" evidence="3">
    <location>
        <begin position="470"/>
        <end position="509"/>
    </location>
</feature>
<feature type="compositionally biased region" description="Basic and acidic residues" evidence="3">
    <location>
        <begin position="1565"/>
        <end position="1589"/>
    </location>
</feature>
<feature type="compositionally biased region" description="Basic and acidic residues" evidence="3">
    <location>
        <begin position="1955"/>
        <end position="1964"/>
    </location>
</feature>
<feature type="compositionally biased region" description="Polar residues" evidence="3">
    <location>
        <begin position="2036"/>
        <end position="2047"/>
    </location>
</feature>
<feature type="compositionally biased region" description="Basic and acidic residues" evidence="3">
    <location>
        <begin position="2048"/>
        <end position="2059"/>
    </location>
</feature>
<feature type="compositionally biased region" description="Polar residues" evidence="3">
    <location>
        <begin position="2084"/>
        <end position="2095"/>
    </location>
</feature>
<feature type="compositionally biased region" description="Acidic residues" evidence="3">
    <location>
        <begin position="2138"/>
        <end position="2151"/>
    </location>
</feature>
<feature type="compositionally biased region" description="Polar residues" evidence="3">
    <location>
        <begin position="2221"/>
        <end position="2233"/>
    </location>
</feature>
<feature type="sequence conflict" description="In Ref. 2; AAI25699." evidence="4" ref="2">
    <original>IL</original>
    <variation>SK</variation>
    <location>
        <begin position="16"/>
        <end position="17"/>
    </location>
</feature>
<feature type="sequence conflict" description="In Ref. 2; AAI25699." evidence="4" ref="2">
    <original>T</original>
    <variation>S</variation>
    <location>
        <position position="26"/>
    </location>
</feature>
<feature type="sequence conflict" description="In Ref. 2; AAI25699." evidence="4" ref="2">
    <original>R</original>
    <variation>L</variation>
    <location>
        <position position="92"/>
    </location>
</feature>
<feature type="sequence conflict" description="In Ref. 2; AAI25699." evidence="4" ref="2">
    <original>R</original>
    <variation>K</variation>
    <location>
        <position position="510"/>
    </location>
</feature>
<feature type="sequence conflict" description="In Ref. 2; AAI25699." evidence="4" ref="2">
    <original>T</original>
    <variation>A</variation>
    <location>
        <position position="1741"/>
    </location>
</feature>
<feature type="sequence conflict" description="In Ref. 2; AAI25699." evidence="4" ref="2">
    <original>R</original>
    <variation>G</variation>
    <location>
        <position position="2094"/>
    </location>
</feature>
<protein>
    <recommendedName>
        <fullName>C2 domain-containing protein 3</fullName>
    </recommendedName>
</protein>